<protein>
    <recommendedName>
        <fullName evidence="1">Holliday junction branch migration complex subunit RuvA</fullName>
    </recommendedName>
</protein>
<name>RUVA_BIFA0</name>
<sequence length="207" mass="22053">MIGMLKGRVESVDTSNAVVDVHGVGFELRMPSNDLTAMHMGQDVKIYTSMSVSQDAITLFGFLDARSKRMFLQLQKVSGVGPKVALSLLSTLAPDDLAQAIHDGDDKALSRAPGLGRKGAQKIILELKGSIDVDKIETGEPTSTQRIPTDKGVEQVVEGLMSLGWKQADAQQAVDSVISSSGIALPLEEGNVPTVLRLALTSLDRGR</sequence>
<dbReference type="EMBL" id="CP001213">
    <property type="protein sequence ID" value="ACL29627.1"/>
    <property type="molecule type" value="Genomic_DNA"/>
</dbReference>
<dbReference type="RefSeq" id="WP_004217958.1">
    <property type="nucleotide sequence ID" value="NC_011835.1"/>
</dbReference>
<dbReference type="SMR" id="B8DUE8"/>
<dbReference type="STRING" id="442563.BLA_1342"/>
<dbReference type="GeneID" id="29695590"/>
<dbReference type="KEGG" id="bla:BLA_1342"/>
<dbReference type="PATRIC" id="fig|442563.4.peg.1404"/>
<dbReference type="HOGENOM" id="CLU_087936_2_1_11"/>
<dbReference type="Proteomes" id="UP000002456">
    <property type="component" value="Chromosome"/>
</dbReference>
<dbReference type="GO" id="GO:0005737">
    <property type="term" value="C:cytoplasm"/>
    <property type="evidence" value="ECO:0007669"/>
    <property type="project" value="UniProtKB-SubCell"/>
</dbReference>
<dbReference type="GO" id="GO:0009379">
    <property type="term" value="C:Holliday junction helicase complex"/>
    <property type="evidence" value="ECO:0007669"/>
    <property type="project" value="InterPro"/>
</dbReference>
<dbReference type="GO" id="GO:0048476">
    <property type="term" value="C:Holliday junction resolvase complex"/>
    <property type="evidence" value="ECO:0007669"/>
    <property type="project" value="UniProtKB-UniRule"/>
</dbReference>
<dbReference type="GO" id="GO:0005524">
    <property type="term" value="F:ATP binding"/>
    <property type="evidence" value="ECO:0007669"/>
    <property type="project" value="InterPro"/>
</dbReference>
<dbReference type="GO" id="GO:0000400">
    <property type="term" value="F:four-way junction DNA binding"/>
    <property type="evidence" value="ECO:0007669"/>
    <property type="project" value="UniProtKB-UniRule"/>
</dbReference>
<dbReference type="GO" id="GO:0009378">
    <property type="term" value="F:four-way junction helicase activity"/>
    <property type="evidence" value="ECO:0007669"/>
    <property type="project" value="InterPro"/>
</dbReference>
<dbReference type="GO" id="GO:0006310">
    <property type="term" value="P:DNA recombination"/>
    <property type="evidence" value="ECO:0007669"/>
    <property type="project" value="UniProtKB-UniRule"/>
</dbReference>
<dbReference type="GO" id="GO:0006281">
    <property type="term" value="P:DNA repair"/>
    <property type="evidence" value="ECO:0007669"/>
    <property type="project" value="UniProtKB-UniRule"/>
</dbReference>
<dbReference type="CDD" id="cd14332">
    <property type="entry name" value="UBA_RuvA_C"/>
    <property type="match status" value="1"/>
</dbReference>
<dbReference type="Gene3D" id="1.10.150.20">
    <property type="entry name" value="5' to 3' exonuclease, C-terminal subdomain"/>
    <property type="match status" value="1"/>
</dbReference>
<dbReference type="Gene3D" id="1.10.8.10">
    <property type="entry name" value="DNA helicase RuvA subunit, C-terminal domain"/>
    <property type="match status" value="1"/>
</dbReference>
<dbReference type="Gene3D" id="2.40.50.140">
    <property type="entry name" value="Nucleic acid-binding proteins"/>
    <property type="match status" value="1"/>
</dbReference>
<dbReference type="HAMAP" id="MF_00031">
    <property type="entry name" value="DNA_HJ_migration_RuvA"/>
    <property type="match status" value="1"/>
</dbReference>
<dbReference type="InterPro" id="IPR013849">
    <property type="entry name" value="DNA_helicase_Holl-junc_RuvA_I"/>
</dbReference>
<dbReference type="InterPro" id="IPR003583">
    <property type="entry name" value="Hlx-hairpin-Hlx_DNA-bd_motif"/>
</dbReference>
<dbReference type="InterPro" id="IPR012340">
    <property type="entry name" value="NA-bd_OB-fold"/>
</dbReference>
<dbReference type="InterPro" id="IPR000085">
    <property type="entry name" value="RuvA"/>
</dbReference>
<dbReference type="InterPro" id="IPR010994">
    <property type="entry name" value="RuvA_2-like"/>
</dbReference>
<dbReference type="InterPro" id="IPR011114">
    <property type="entry name" value="RuvA_C"/>
</dbReference>
<dbReference type="InterPro" id="IPR036267">
    <property type="entry name" value="RuvA_C_sf"/>
</dbReference>
<dbReference type="NCBIfam" id="TIGR00084">
    <property type="entry name" value="ruvA"/>
    <property type="match status" value="1"/>
</dbReference>
<dbReference type="Pfam" id="PF14520">
    <property type="entry name" value="HHH_5"/>
    <property type="match status" value="1"/>
</dbReference>
<dbReference type="Pfam" id="PF07499">
    <property type="entry name" value="RuvA_C"/>
    <property type="match status" value="1"/>
</dbReference>
<dbReference type="Pfam" id="PF01330">
    <property type="entry name" value="RuvA_N"/>
    <property type="match status" value="1"/>
</dbReference>
<dbReference type="SMART" id="SM00278">
    <property type="entry name" value="HhH1"/>
    <property type="match status" value="2"/>
</dbReference>
<dbReference type="SUPFAM" id="SSF46929">
    <property type="entry name" value="DNA helicase RuvA subunit, C-terminal domain"/>
    <property type="match status" value="1"/>
</dbReference>
<dbReference type="SUPFAM" id="SSF50249">
    <property type="entry name" value="Nucleic acid-binding proteins"/>
    <property type="match status" value="1"/>
</dbReference>
<dbReference type="SUPFAM" id="SSF47781">
    <property type="entry name" value="RuvA domain 2-like"/>
    <property type="match status" value="1"/>
</dbReference>
<comment type="function">
    <text evidence="1">The RuvA-RuvB-RuvC complex processes Holliday junction (HJ) DNA during genetic recombination and DNA repair, while the RuvA-RuvB complex plays an important role in the rescue of blocked DNA replication forks via replication fork reversal (RFR). RuvA specifically binds to HJ cruciform DNA, conferring on it an open structure. The RuvB hexamer acts as an ATP-dependent pump, pulling dsDNA into and through the RuvAB complex. HJ branch migration allows RuvC to scan DNA until it finds its consensus sequence, where it cleaves and resolves the cruciform DNA.</text>
</comment>
<comment type="subunit">
    <text evidence="1">Homotetramer. Forms an RuvA(8)-RuvB(12)-Holliday junction (HJ) complex. HJ DNA is sandwiched between 2 RuvA tetramers; dsDNA enters through RuvA and exits via RuvB. An RuvB hexamer assembles on each DNA strand where it exits the tetramer. Each RuvB hexamer is contacted by two RuvA subunits (via domain III) on 2 adjacent RuvB subunits; this complex drives branch migration. In the full resolvosome a probable DNA-RuvA(4)-RuvB(12)-RuvC(2) complex forms which resolves the HJ.</text>
</comment>
<comment type="subcellular location">
    <subcellularLocation>
        <location evidence="1">Cytoplasm</location>
    </subcellularLocation>
</comment>
<comment type="domain">
    <text evidence="1">Has three domains with a flexible linker between the domains II and III and assumes an 'L' shape. Domain III is highly mobile and contacts RuvB.</text>
</comment>
<comment type="similarity">
    <text evidence="1">Belongs to the RuvA family.</text>
</comment>
<gene>
    <name evidence="1" type="primary">ruvA</name>
    <name type="ordered locus">BLA_1342</name>
</gene>
<reference key="1">
    <citation type="journal article" date="2009" name="J. Bacteriol.">
        <title>Genome sequence of the probiotic bacterium Bifidobacterium animalis subsp. lactis AD011.</title>
        <authorList>
            <person name="Kim J.F."/>
            <person name="Jeong H."/>
            <person name="Yu D.S."/>
            <person name="Choi S.-H."/>
            <person name="Hur C.-G."/>
            <person name="Park M.-S."/>
            <person name="Yoon S.H."/>
            <person name="Kim D.-W."/>
            <person name="Ji G.E."/>
            <person name="Park H.-S."/>
            <person name="Oh T.K."/>
        </authorList>
    </citation>
    <scope>NUCLEOTIDE SEQUENCE [LARGE SCALE GENOMIC DNA]</scope>
    <source>
        <strain>AD011</strain>
    </source>
</reference>
<keyword id="KW-0963">Cytoplasm</keyword>
<keyword id="KW-0227">DNA damage</keyword>
<keyword id="KW-0233">DNA recombination</keyword>
<keyword id="KW-0234">DNA repair</keyword>
<keyword id="KW-0238">DNA-binding</keyword>
<keyword id="KW-1185">Reference proteome</keyword>
<accession>B8DUE8</accession>
<proteinExistence type="inferred from homology"/>
<evidence type="ECO:0000255" key="1">
    <source>
        <dbReference type="HAMAP-Rule" id="MF_00031"/>
    </source>
</evidence>
<organism>
    <name type="scientific">Bifidobacterium animalis subsp. lactis (strain AD011)</name>
    <dbReference type="NCBI Taxonomy" id="442563"/>
    <lineage>
        <taxon>Bacteria</taxon>
        <taxon>Bacillati</taxon>
        <taxon>Actinomycetota</taxon>
        <taxon>Actinomycetes</taxon>
        <taxon>Bifidobacteriales</taxon>
        <taxon>Bifidobacteriaceae</taxon>
        <taxon>Bifidobacterium</taxon>
    </lineage>
</organism>
<feature type="chain" id="PRO_1000195119" description="Holliday junction branch migration complex subunit RuvA">
    <location>
        <begin position="1"/>
        <end position="207"/>
    </location>
</feature>
<feature type="region of interest" description="Domain I" evidence="1">
    <location>
        <begin position="1"/>
        <end position="63"/>
    </location>
</feature>
<feature type="region of interest" description="Domain II" evidence="1">
    <location>
        <begin position="64"/>
        <end position="142"/>
    </location>
</feature>
<feature type="region of interest" description="Flexible linker" evidence="1">
    <location>
        <begin position="143"/>
        <end position="153"/>
    </location>
</feature>
<feature type="region of interest" description="Domain III" evidence="1">
    <location>
        <begin position="153"/>
        <end position="207"/>
    </location>
</feature>